<gene>
    <name evidence="1" type="primary">ppk</name>
    <name type="ordered locus">ABBFA_002620</name>
</gene>
<accession>B7GXW8</accession>
<evidence type="ECO:0000255" key="1">
    <source>
        <dbReference type="HAMAP-Rule" id="MF_00347"/>
    </source>
</evidence>
<protein>
    <recommendedName>
        <fullName evidence="1">Polyphosphate kinase</fullName>
        <ecNumber evidence="1">2.7.4.1</ecNumber>
    </recommendedName>
    <alternativeName>
        <fullName evidence="1">ATP-polyphosphate phosphotransferase</fullName>
    </alternativeName>
    <alternativeName>
        <fullName evidence="1">Polyphosphoric acid kinase</fullName>
    </alternativeName>
</protein>
<name>PPK1_ACIB3</name>
<reference key="1">
    <citation type="journal article" date="2008" name="J. Bacteriol.">
        <title>Comparative genome sequence analysis of multidrug-resistant Acinetobacter baumannii.</title>
        <authorList>
            <person name="Adams M.D."/>
            <person name="Goglin K."/>
            <person name="Molyneaux N."/>
            <person name="Hujer K.M."/>
            <person name="Lavender H."/>
            <person name="Jamison J.J."/>
            <person name="MacDonald I.J."/>
            <person name="Martin K.M."/>
            <person name="Russo T."/>
            <person name="Campagnari A.A."/>
            <person name="Hujer A.M."/>
            <person name="Bonomo R.A."/>
            <person name="Gill S.R."/>
        </authorList>
    </citation>
    <scope>NUCLEOTIDE SEQUENCE [LARGE SCALE GENOMIC DNA]</scope>
    <source>
        <strain>AB307-0294</strain>
    </source>
</reference>
<comment type="function">
    <text evidence="1">Catalyzes the reversible transfer of the terminal phosphate of ATP to form a long-chain polyphosphate (polyP).</text>
</comment>
<comment type="catalytic activity">
    <reaction evidence="1">
        <text>[phosphate](n) + ATP = [phosphate](n+1) + ADP</text>
        <dbReference type="Rhea" id="RHEA:19573"/>
        <dbReference type="Rhea" id="RHEA-COMP:9859"/>
        <dbReference type="Rhea" id="RHEA-COMP:14280"/>
        <dbReference type="ChEBI" id="CHEBI:16838"/>
        <dbReference type="ChEBI" id="CHEBI:30616"/>
        <dbReference type="ChEBI" id="CHEBI:456216"/>
        <dbReference type="EC" id="2.7.4.1"/>
    </reaction>
</comment>
<comment type="cofactor">
    <cofactor evidence="1">
        <name>Mg(2+)</name>
        <dbReference type="ChEBI" id="CHEBI:18420"/>
    </cofactor>
</comment>
<comment type="PTM">
    <text evidence="1">An intermediate of this reaction is the autophosphorylated ppk in which a phosphate is covalently linked to a histidine residue through a N-P bond.</text>
</comment>
<comment type="similarity">
    <text evidence="1">Belongs to the polyphosphate kinase 1 (PPK1) family.</text>
</comment>
<organism>
    <name type="scientific">Acinetobacter baumannii (strain AB307-0294)</name>
    <dbReference type="NCBI Taxonomy" id="557600"/>
    <lineage>
        <taxon>Bacteria</taxon>
        <taxon>Pseudomonadati</taxon>
        <taxon>Pseudomonadota</taxon>
        <taxon>Gammaproteobacteria</taxon>
        <taxon>Moraxellales</taxon>
        <taxon>Moraxellaceae</taxon>
        <taxon>Acinetobacter</taxon>
        <taxon>Acinetobacter calcoaceticus/baumannii complex</taxon>
    </lineage>
</organism>
<proteinExistence type="inferred from homology"/>
<sequence>MNTAITATTPTEYSYNDRYINRELSILDFHLRVLEQAVDPLHPLLERMNFLLIFSRNLDEFFEIRVAGVMEQFALGNESRSPDGLTPRQVLQKISETAHTAIERQYRILNEEILPKLREEDICFLRRGELTPAQSAWVKKYFQEQVAPVLTPISLDPAHPFPRLVNKSLNFIVTLEGKDAFGRQIDLAVVPAPRSLPRVVRLPDELTGGKEHHVMLSAIIHEHVSDLFPGMTATGCYQFRVTRNADLALNEDVEDLAKALKGELSSRRFGRAVRLEVTQNCPQHIYEYLLEEFDLNEEQLYKVDGPVNLARLVSNFKRPHLRYDSHTPVVPKVFKKTESIFSAMQKQDILLHHPFESFAPVIQLLREAARDPQVLAIKQTLYRSGADSEIVQVLAEAARNGKEVTAVIELRARFDEESNIEVANVLQEAGAVVVYGIVGYKTHAKMIMVVRRENNKLVRYVHLGTGNYHAMNARIYTDYGLMTTDKDLCEDVHRIFQELTGMGKMAKLKKLLHAPFTLHAQLINFIDEEIANAKAGRKAQIIVKVNALTEVQLINKLYEASQAGVQVDLIIRSICCLRPGLPNLSENIRVRSIVGRFLEHTRVYYFSNNGDARIYCSSADWMDRNLFNRVEACFPIEDPALKKRIYQQGLLNYLQDNQQAWLLQGDGTWIRAKPAEGEKLHNAQRELLETFK</sequence>
<keyword id="KW-0067">ATP-binding</keyword>
<keyword id="KW-0418">Kinase</keyword>
<keyword id="KW-0460">Magnesium</keyword>
<keyword id="KW-0479">Metal-binding</keyword>
<keyword id="KW-0547">Nucleotide-binding</keyword>
<keyword id="KW-0597">Phosphoprotein</keyword>
<keyword id="KW-0808">Transferase</keyword>
<feature type="chain" id="PRO_1000120492" description="Polyphosphate kinase">
    <location>
        <begin position="1"/>
        <end position="692"/>
    </location>
</feature>
<feature type="active site" description="Phosphohistidine intermediate" evidence="1">
    <location>
        <position position="443"/>
    </location>
</feature>
<feature type="binding site" evidence="1">
    <location>
        <position position="57"/>
    </location>
    <ligand>
        <name>ATP</name>
        <dbReference type="ChEBI" id="CHEBI:30616"/>
    </ligand>
</feature>
<feature type="binding site" evidence="1">
    <location>
        <position position="383"/>
    </location>
    <ligand>
        <name>Mg(2+)</name>
        <dbReference type="ChEBI" id="CHEBI:18420"/>
    </ligand>
</feature>
<feature type="binding site" evidence="1">
    <location>
        <position position="413"/>
    </location>
    <ligand>
        <name>Mg(2+)</name>
        <dbReference type="ChEBI" id="CHEBI:18420"/>
    </ligand>
</feature>
<feature type="binding site" evidence="1">
    <location>
        <position position="476"/>
    </location>
    <ligand>
        <name>ATP</name>
        <dbReference type="ChEBI" id="CHEBI:30616"/>
    </ligand>
</feature>
<feature type="binding site" evidence="1">
    <location>
        <position position="572"/>
    </location>
    <ligand>
        <name>ATP</name>
        <dbReference type="ChEBI" id="CHEBI:30616"/>
    </ligand>
</feature>
<feature type="binding site" evidence="1">
    <location>
        <position position="600"/>
    </location>
    <ligand>
        <name>ATP</name>
        <dbReference type="ChEBI" id="CHEBI:30616"/>
    </ligand>
</feature>
<dbReference type="EC" id="2.7.4.1" evidence="1"/>
<dbReference type="EMBL" id="CP001172">
    <property type="protein sequence ID" value="ACJ57355.1"/>
    <property type="molecule type" value="Genomic_DNA"/>
</dbReference>
<dbReference type="SMR" id="B7GXW8"/>
<dbReference type="HOGENOM" id="CLU_009678_5_0_6"/>
<dbReference type="Proteomes" id="UP000006924">
    <property type="component" value="Chromosome"/>
</dbReference>
<dbReference type="GO" id="GO:0009358">
    <property type="term" value="C:polyphosphate kinase complex"/>
    <property type="evidence" value="ECO:0007669"/>
    <property type="project" value="InterPro"/>
</dbReference>
<dbReference type="GO" id="GO:0005524">
    <property type="term" value="F:ATP binding"/>
    <property type="evidence" value="ECO:0007669"/>
    <property type="project" value="UniProtKB-KW"/>
</dbReference>
<dbReference type="GO" id="GO:0046872">
    <property type="term" value="F:metal ion binding"/>
    <property type="evidence" value="ECO:0007669"/>
    <property type="project" value="UniProtKB-KW"/>
</dbReference>
<dbReference type="GO" id="GO:0008976">
    <property type="term" value="F:polyphosphate kinase activity"/>
    <property type="evidence" value="ECO:0007669"/>
    <property type="project" value="UniProtKB-UniRule"/>
</dbReference>
<dbReference type="GO" id="GO:0006799">
    <property type="term" value="P:polyphosphate biosynthetic process"/>
    <property type="evidence" value="ECO:0007669"/>
    <property type="project" value="UniProtKB-UniRule"/>
</dbReference>
<dbReference type="CDD" id="cd09165">
    <property type="entry name" value="PLDc_PaPPK1_C1_like"/>
    <property type="match status" value="1"/>
</dbReference>
<dbReference type="CDD" id="cd09168">
    <property type="entry name" value="PLDc_PaPPK1_C2_like"/>
    <property type="match status" value="1"/>
</dbReference>
<dbReference type="Gene3D" id="3.30.870.10">
    <property type="entry name" value="Endonuclease Chain A"/>
    <property type="match status" value="2"/>
</dbReference>
<dbReference type="Gene3D" id="3.30.1840.10">
    <property type="entry name" value="Polyphosphate kinase middle domain"/>
    <property type="match status" value="1"/>
</dbReference>
<dbReference type="Gene3D" id="1.20.58.310">
    <property type="entry name" value="Polyphosphate kinase N-terminal domain"/>
    <property type="match status" value="1"/>
</dbReference>
<dbReference type="HAMAP" id="MF_00347">
    <property type="entry name" value="Polyphosphate_kinase"/>
    <property type="match status" value="1"/>
</dbReference>
<dbReference type="InterPro" id="IPR003414">
    <property type="entry name" value="PP_kinase"/>
</dbReference>
<dbReference type="InterPro" id="IPR041108">
    <property type="entry name" value="PP_kinase_C_1"/>
</dbReference>
<dbReference type="InterPro" id="IPR024953">
    <property type="entry name" value="PP_kinase_middle"/>
</dbReference>
<dbReference type="InterPro" id="IPR036830">
    <property type="entry name" value="PP_kinase_middle_dom_sf"/>
</dbReference>
<dbReference type="InterPro" id="IPR025200">
    <property type="entry name" value="PPK_C_dom2"/>
</dbReference>
<dbReference type="InterPro" id="IPR025198">
    <property type="entry name" value="PPK_N_dom"/>
</dbReference>
<dbReference type="InterPro" id="IPR036832">
    <property type="entry name" value="PPK_N_dom_sf"/>
</dbReference>
<dbReference type="NCBIfam" id="TIGR03705">
    <property type="entry name" value="poly_P_kin"/>
    <property type="match status" value="1"/>
</dbReference>
<dbReference type="NCBIfam" id="NF003917">
    <property type="entry name" value="PRK05443.1-1"/>
    <property type="match status" value="1"/>
</dbReference>
<dbReference type="NCBIfam" id="NF003918">
    <property type="entry name" value="PRK05443.1-2"/>
    <property type="match status" value="1"/>
</dbReference>
<dbReference type="NCBIfam" id="NF003921">
    <property type="entry name" value="PRK05443.2-2"/>
    <property type="match status" value="1"/>
</dbReference>
<dbReference type="PANTHER" id="PTHR30218">
    <property type="entry name" value="POLYPHOSPHATE KINASE"/>
    <property type="match status" value="1"/>
</dbReference>
<dbReference type="PANTHER" id="PTHR30218:SF0">
    <property type="entry name" value="POLYPHOSPHATE KINASE"/>
    <property type="match status" value="1"/>
</dbReference>
<dbReference type="Pfam" id="PF02503">
    <property type="entry name" value="PP_kinase"/>
    <property type="match status" value="1"/>
</dbReference>
<dbReference type="Pfam" id="PF13090">
    <property type="entry name" value="PP_kinase_C"/>
    <property type="match status" value="1"/>
</dbReference>
<dbReference type="Pfam" id="PF17941">
    <property type="entry name" value="PP_kinase_C_1"/>
    <property type="match status" value="1"/>
</dbReference>
<dbReference type="Pfam" id="PF13089">
    <property type="entry name" value="PP_kinase_N"/>
    <property type="match status" value="1"/>
</dbReference>
<dbReference type="PIRSF" id="PIRSF015589">
    <property type="entry name" value="PP_kinase"/>
    <property type="match status" value="1"/>
</dbReference>
<dbReference type="SUPFAM" id="SSF56024">
    <property type="entry name" value="Phospholipase D/nuclease"/>
    <property type="match status" value="2"/>
</dbReference>
<dbReference type="SUPFAM" id="SSF143724">
    <property type="entry name" value="PHP14-like"/>
    <property type="match status" value="1"/>
</dbReference>
<dbReference type="SUPFAM" id="SSF140356">
    <property type="entry name" value="PPK N-terminal domain-like"/>
    <property type="match status" value="1"/>
</dbReference>